<keyword id="KW-0227">DNA damage</keyword>
<keyword id="KW-0234">DNA repair</keyword>
<keyword id="KW-1185">Reference proteome</keyword>
<evidence type="ECO:0000255" key="1">
    <source>
        <dbReference type="HAMAP-Rule" id="MF_00149"/>
    </source>
</evidence>
<evidence type="ECO:0000256" key="2">
    <source>
        <dbReference type="SAM" id="MobiDB-lite"/>
    </source>
</evidence>
<name>MUTL_SHEON</name>
<protein>
    <recommendedName>
        <fullName evidence="1">DNA mismatch repair protein MutL</fullName>
    </recommendedName>
</protein>
<gene>
    <name evidence="1" type="primary">mutL</name>
    <name type="ordered locus">SO_0601</name>
</gene>
<comment type="function">
    <text evidence="1">This protein is involved in the repair of mismatches in DNA. It is required for dam-dependent methyl-directed DNA mismatch repair. May act as a 'molecular matchmaker', a protein that promotes the formation of a stable complex between two or more DNA-binding proteins in an ATP-dependent manner without itself being part of a final effector complex.</text>
</comment>
<comment type="similarity">
    <text evidence="1">Belongs to the DNA mismatch repair MutL/HexB family.</text>
</comment>
<dbReference type="EMBL" id="AE014299">
    <property type="protein sequence ID" value="AAN53679.1"/>
    <property type="molecule type" value="Genomic_DNA"/>
</dbReference>
<dbReference type="RefSeq" id="NP_716234.1">
    <property type="nucleotide sequence ID" value="NC_004347.2"/>
</dbReference>
<dbReference type="RefSeq" id="WP_011070932.1">
    <property type="nucleotide sequence ID" value="NC_004347.2"/>
</dbReference>
<dbReference type="SMR" id="Q8EJ70"/>
<dbReference type="STRING" id="211586.SO_0601"/>
<dbReference type="PaxDb" id="211586-SO_0601"/>
<dbReference type="KEGG" id="son:SO_0601"/>
<dbReference type="PATRIC" id="fig|211586.12.peg.580"/>
<dbReference type="eggNOG" id="COG0323">
    <property type="taxonomic scope" value="Bacteria"/>
</dbReference>
<dbReference type="HOGENOM" id="CLU_004131_4_2_6"/>
<dbReference type="OrthoDB" id="9763467at2"/>
<dbReference type="PhylomeDB" id="Q8EJ70"/>
<dbReference type="BioCyc" id="SONE211586:G1GMP-571-MONOMER"/>
<dbReference type="Proteomes" id="UP000008186">
    <property type="component" value="Chromosome"/>
</dbReference>
<dbReference type="GO" id="GO:0032300">
    <property type="term" value="C:mismatch repair complex"/>
    <property type="evidence" value="ECO:0000318"/>
    <property type="project" value="GO_Central"/>
</dbReference>
<dbReference type="GO" id="GO:0005524">
    <property type="term" value="F:ATP binding"/>
    <property type="evidence" value="ECO:0007669"/>
    <property type="project" value="InterPro"/>
</dbReference>
<dbReference type="GO" id="GO:0016887">
    <property type="term" value="F:ATP hydrolysis activity"/>
    <property type="evidence" value="ECO:0000318"/>
    <property type="project" value="GO_Central"/>
</dbReference>
<dbReference type="GO" id="GO:0140664">
    <property type="term" value="F:ATP-dependent DNA damage sensor activity"/>
    <property type="evidence" value="ECO:0007669"/>
    <property type="project" value="InterPro"/>
</dbReference>
<dbReference type="GO" id="GO:0030983">
    <property type="term" value="F:mismatched DNA binding"/>
    <property type="evidence" value="ECO:0007669"/>
    <property type="project" value="InterPro"/>
</dbReference>
<dbReference type="GO" id="GO:0006298">
    <property type="term" value="P:mismatch repair"/>
    <property type="evidence" value="ECO:0000318"/>
    <property type="project" value="GO_Central"/>
</dbReference>
<dbReference type="CDD" id="cd16926">
    <property type="entry name" value="HATPase_MutL-MLH-PMS-like"/>
    <property type="match status" value="1"/>
</dbReference>
<dbReference type="CDD" id="cd03482">
    <property type="entry name" value="MutL_Trans_MutL"/>
    <property type="match status" value="1"/>
</dbReference>
<dbReference type="FunFam" id="3.30.230.10:FF:000013">
    <property type="entry name" value="DNA mismatch repair endonuclease MutL"/>
    <property type="match status" value="1"/>
</dbReference>
<dbReference type="FunFam" id="3.30.565.10:FF:000003">
    <property type="entry name" value="DNA mismatch repair endonuclease MutL"/>
    <property type="match status" value="1"/>
</dbReference>
<dbReference type="Gene3D" id="3.30.230.10">
    <property type="match status" value="1"/>
</dbReference>
<dbReference type="Gene3D" id="3.30.565.10">
    <property type="entry name" value="Histidine kinase-like ATPase, C-terminal domain"/>
    <property type="match status" value="1"/>
</dbReference>
<dbReference type="Gene3D" id="3.30.1370.100">
    <property type="entry name" value="MutL, C-terminal domain, regulatory subdomain"/>
    <property type="match status" value="1"/>
</dbReference>
<dbReference type="HAMAP" id="MF_00149">
    <property type="entry name" value="DNA_mis_repair"/>
    <property type="match status" value="1"/>
</dbReference>
<dbReference type="InterPro" id="IPR014762">
    <property type="entry name" value="DNA_mismatch_repair_CS"/>
</dbReference>
<dbReference type="InterPro" id="IPR020667">
    <property type="entry name" value="DNA_mismatch_repair_MutL"/>
</dbReference>
<dbReference type="InterPro" id="IPR013507">
    <property type="entry name" value="DNA_mismatch_S5_2-like"/>
</dbReference>
<dbReference type="InterPro" id="IPR036890">
    <property type="entry name" value="HATPase_C_sf"/>
</dbReference>
<dbReference type="InterPro" id="IPR002099">
    <property type="entry name" value="MutL/Mlh/PMS"/>
</dbReference>
<dbReference type="InterPro" id="IPR038973">
    <property type="entry name" value="MutL/Mlh/Pms-like"/>
</dbReference>
<dbReference type="InterPro" id="IPR014790">
    <property type="entry name" value="MutL_C"/>
</dbReference>
<dbReference type="InterPro" id="IPR042121">
    <property type="entry name" value="MutL_C_regsub"/>
</dbReference>
<dbReference type="InterPro" id="IPR037198">
    <property type="entry name" value="MutL_C_sf"/>
</dbReference>
<dbReference type="InterPro" id="IPR020568">
    <property type="entry name" value="Ribosomal_Su5_D2-typ_SF"/>
</dbReference>
<dbReference type="InterPro" id="IPR014721">
    <property type="entry name" value="Ribsml_uS5_D2-typ_fold_subgr"/>
</dbReference>
<dbReference type="NCBIfam" id="TIGR00585">
    <property type="entry name" value="mutl"/>
    <property type="match status" value="1"/>
</dbReference>
<dbReference type="NCBIfam" id="NF000948">
    <property type="entry name" value="PRK00095.1-1"/>
    <property type="match status" value="1"/>
</dbReference>
<dbReference type="PANTHER" id="PTHR10073">
    <property type="entry name" value="DNA MISMATCH REPAIR PROTEIN MLH, PMS, MUTL"/>
    <property type="match status" value="1"/>
</dbReference>
<dbReference type="PANTHER" id="PTHR10073:SF12">
    <property type="entry name" value="DNA MISMATCH REPAIR PROTEIN MLH1"/>
    <property type="match status" value="1"/>
</dbReference>
<dbReference type="Pfam" id="PF01119">
    <property type="entry name" value="DNA_mis_repair"/>
    <property type="match status" value="1"/>
</dbReference>
<dbReference type="Pfam" id="PF13589">
    <property type="entry name" value="HATPase_c_3"/>
    <property type="match status" value="1"/>
</dbReference>
<dbReference type="Pfam" id="PF08676">
    <property type="entry name" value="MutL_C"/>
    <property type="match status" value="1"/>
</dbReference>
<dbReference type="SMART" id="SM01340">
    <property type="entry name" value="DNA_mis_repair"/>
    <property type="match status" value="1"/>
</dbReference>
<dbReference type="SMART" id="SM00853">
    <property type="entry name" value="MutL_C"/>
    <property type="match status" value="1"/>
</dbReference>
<dbReference type="SUPFAM" id="SSF55874">
    <property type="entry name" value="ATPase domain of HSP90 chaperone/DNA topoisomerase II/histidine kinase"/>
    <property type="match status" value="1"/>
</dbReference>
<dbReference type="SUPFAM" id="SSF118116">
    <property type="entry name" value="DNA mismatch repair protein MutL"/>
    <property type="match status" value="1"/>
</dbReference>
<dbReference type="SUPFAM" id="SSF54211">
    <property type="entry name" value="Ribosomal protein S5 domain 2-like"/>
    <property type="match status" value="1"/>
</dbReference>
<dbReference type="PROSITE" id="PS00058">
    <property type="entry name" value="DNA_MISMATCH_REPAIR_1"/>
    <property type="match status" value="1"/>
</dbReference>
<sequence length="631" mass="70402">MGIQILPPQLANQIAAGEVVERPASVVKELVENSLDAGASRIDIEIDKGGSKLIKIRDNGSGIPKEELALALSRHATSKLHSLDDLEAILSFGFRGEALASISSVSRLTLTSRTAEQSEAWQAYAEGVEMAVKVMPAAHPVGSTIEVVDLFFNTPARRRFLKSDKTEFTHIDEWLKRIALVRGDIHFTLTHNGKTVRNYRPAMNEPQYLQRLTQVAGRPFADEALRVECQHDDLRLSGYLQSPWSTVLTDTHYFYVNGRLVRDRLVNHAVRQAFAQKAEVEQPGYVLMLDIDPHQVDVNVHPAKHEVRFHQSRYVHDYILQALQSALEEAGELRFEPHSPQIDDSSPYVKPETESSAFELQSTESNAKYLGIDTTGERQAEARVVEYRSSDMPKMRTGTAVQSNAFGSMSVPRETRSGSSGESRPRAELPSKTAIASYGALLQTPSYSVQDKAYQPTLPMPSILDGQFWVFTDGPKLSLLRIESVALATRSDEIETKLATGLIGQPLLMPVSVAADTDWSSLLDEHATLIRQLGLELTIRYQQLIIKKVPPYLRDCQLARVIPEWLQSLRFEAPAPNALAIWLAEQSLTGFISAPDVWVAYCQLTEEKRQQIASKAVSLPWQSWLEEQAIE</sequence>
<accession>Q8EJ70</accession>
<reference key="1">
    <citation type="journal article" date="2002" name="Nat. Biotechnol.">
        <title>Genome sequence of the dissimilatory metal ion-reducing bacterium Shewanella oneidensis.</title>
        <authorList>
            <person name="Heidelberg J.F."/>
            <person name="Paulsen I.T."/>
            <person name="Nelson K.E."/>
            <person name="Gaidos E.J."/>
            <person name="Nelson W.C."/>
            <person name="Read T.D."/>
            <person name="Eisen J.A."/>
            <person name="Seshadri R."/>
            <person name="Ward N.L."/>
            <person name="Methe B.A."/>
            <person name="Clayton R.A."/>
            <person name="Meyer T."/>
            <person name="Tsapin A."/>
            <person name="Scott J."/>
            <person name="Beanan M.J."/>
            <person name="Brinkac L.M."/>
            <person name="Daugherty S.C."/>
            <person name="DeBoy R.T."/>
            <person name="Dodson R.J."/>
            <person name="Durkin A.S."/>
            <person name="Haft D.H."/>
            <person name="Kolonay J.F."/>
            <person name="Madupu R."/>
            <person name="Peterson J.D."/>
            <person name="Umayam L.A."/>
            <person name="White O."/>
            <person name="Wolf A.M."/>
            <person name="Vamathevan J.J."/>
            <person name="Weidman J.F."/>
            <person name="Impraim M."/>
            <person name="Lee K."/>
            <person name="Berry K.J."/>
            <person name="Lee C."/>
            <person name="Mueller J."/>
            <person name="Khouri H.M."/>
            <person name="Gill J."/>
            <person name="Utterback T.R."/>
            <person name="McDonald L.A."/>
            <person name="Feldblyum T.V."/>
            <person name="Smith H.O."/>
            <person name="Venter J.C."/>
            <person name="Nealson K.H."/>
            <person name="Fraser C.M."/>
        </authorList>
    </citation>
    <scope>NUCLEOTIDE SEQUENCE [LARGE SCALE GENOMIC DNA]</scope>
    <source>
        <strain>ATCC 700550 / JCM 31522 / CIP 106686 / LMG 19005 / NCIMB 14063 / MR-1</strain>
    </source>
</reference>
<organism>
    <name type="scientific">Shewanella oneidensis (strain ATCC 700550 / JCM 31522 / CIP 106686 / LMG 19005 / NCIMB 14063 / MR-1)</name>
    <dbReference type="NCBI Taxonomy" id="211586"/>
    <lineage>
        <taxon>Bacteria</taxon>
        <taxon>Pseudomonadati</taxon>
        <taxon>Pseudomonadota</taxon>
        <taxon>Gammaproteobacteria</taxon>
        <taxon>Alteromonadales</taxon>
        <taxon>Shewanellaceae</taxon>
        <taxon>Shewanella</taxon>
    </lineage>
</organism>
<feature type="chain" id="PRO_1000076715" description="DNA mismatch repair protein MutL">
    <location>
        <begin position="1"/>
        <end position="631"/>
    </location>
</feature>
<feature type="region of interest" description="Disordered" evidence="2">
    <location>
        <begin position="337"/>
        <end position="362"/>
    </location>
</feature>
<feature type="region of interest" description="Disordered" evidence="2">
    <location>
        <begin position="400"/>
        <end position="429"/>
    </location>
</feature>
<proteinExistence type="inferred from homology"/>